<proteinExistence type="inferred from homology"/>
<evidence type="ECO:0000255" key="1">
    <source>
        <dbReference type="HAMAP-Rule" id="MF_00553"/>
    </source>
</evidence>
<organism>
    <name type="scientific">Thermococcus onnurineus (strain NA1)</name>
    <dbReference type="NCBI Taxonomy" id="523850"/>
    <lineage>
        <taxon>Archaea</taxon>
        <taxon>Methanobacteriati</taxon>
        <taxon>Methanobacteriota</taxon>
        <taxon>Thermococci</taxon>
        <taxon>Thermococcales</taxon>
        <taxon>Thermococcaceae</taxon>
        <taxon>Thermococcus</taxon>
    </lineage>
</organism>
<protein>
    <recommendedName>
        <fullName evidence="1">Proteasome-activating nucleotidase</fullName>
        <shortName evidence="1">PAN</shortName>
    </recommendedName>
    <alternativeName>
        <fullName evidence="1">Proteasomal ATPase</fullName>
    </alternativeName>
    <alternativeName>
        <fullName evidence="1">Proteasome regulatory ATPase</fullName>
    </alternativeName>
    <alternativeName>
        <fullName evidence="1">Proteasome regulatory particle</fullName>
    </alternativeName>
</protein>
<keyword id="KW-0067">ATP-binding</keyword>
<keyword id="KW-0143">Chaperone</keyword>
<keyword id="KW-0175">Coiled coil</keyword>
<keyword id="KW-0963">Cytoplasm</keyword>
<keyword id="KW-0547">Nucleotide-binding</keyword>
<keyword id="KW-0647">Proteasome</keyword>
<sequence length="398" mass="45091">MSIEDVGIKPSEEYDDYIMYLKKRIRQLELQVRTLEADKERLERELSRLRMEMSRLRQPPAFAGTLIELLDEDRAIVQNYNGPRFVVRIAPWIERENLKPGARVALDQRTMAIVELLPSEKDPSVLGFEVIERPTVSYNDIGGLDKQLQELREAIELPLKHPELFEKVGIEPPKGVLLYGPPGCGKTLMAKALAHEVNATFIRVVGSELVRKFIGEGARLVHELFELAKEKAPAIIFIDEIDAIGAKRMDETTGGEREVNRTLMQLLAEMDGFDPSGNVKIIAATNRPDILDPALLRPGRFDRLIEVPLPNFKSRLEILKIHTKRMNLKGVDLRIIAEMTEGASGADLKAITMEAGMFAIRDRREYVTQEDFLKAIEKVLGSEQRLSQQIAMHEVMYG</sequence>
<comment type="function">
    <text evidence="1">ATPase which is responsible for recognizing, binding, unfolding and translocation of substrate proteins into the archaeal 20S proteasome core particle. Is essential for opening the gate of the 20S proteasome via an interaction with its C-terminus, thereby allowing substrate entry and access to the site of proteolysis. Thus, the C-termini of the proteasomal ATPase function like a 'key in a lock' to induce gate opening and therefore regulate proteolysis. Unfolding activity requires energy from ATP hydrolysis, whereas ATP binding alone promotes ATPase-20S proteasome association which triggers gate opening, and supports translocation of unfolded substrates.</text>
</comment>
<comment type="subunit">
    <text evidence="1">Homohexamer. The hexameric complex has a two-ring architecture resembling a top hat that caps the 20S proteasome core at one or both ends. Upon ATP-binding, the C-terminus of PAN interacts with the alpha-rings of the proteasome core by binding to the intersubunit pockets.</text>
</comment>
<comment type="subcellular location">
    <subcellularLocation>
        <location evidence="1">Cytoplasm</location>
    </subcellularLocation>
</comment>
<comment type="domain">
    <text evidence="1">Consists of three main regions, an N-terminal coiled-coil domain that may assist in substrate recognition, an interdomain involved in PAN hexamerization, and a C-terminal ATPase domain of the AAA type.</text>
</comment>
<comment type="similarity">
    <text evidence="1">Belongs to the AAA ATPase family.</text>
</comment>
<dbReference type="EMBL" id="CP000855">
    <property type="protein sequence ID" value="ACJ16875.1"/>
    <property type="molecule type" value="Genomic_DNA"/>
</dbReference>
<dbReference type="RefSeq" id="WP_012572347.1">
    <property type="nucleotide sequence ID" value="NC_011529.1"/>
</dbReference>
<dbReference type="SMR" id="B6YXR2"/>
<dbReference type="STRING" id="523850.TON_1385"/>
<dbReference type="GeneID" id="7018416"/>
<dbReference type="KEGG" id="ton:TON_1385"/>
<dbReference type="PATRIC" id="fig|523850.10.peg.1396"/>
<dbReference type="eggNOG" id="arCOG01306">
    <property type="taxonomic scope" value="Archaea"/>
</dbReference>
<dbReference type="HOGENOM" id="CLU_000688_2_0_2"/>
<dbReference type="OrthoDB" id="77269at2157"/>
<dbReference type="Proteomes" id="UP000002727">
    <property type="component" value="Chromosome"/>
</dbReference>
<dbReference type="GO" id="GO:0005737">
    <property type="term" value="C:cytoplasm"/>
    <property type="evidence" value="ECO:0007669"/>
    <property type="project" value="UniProtKB-SubCell"/>
</dbReference>
<dbReference type="GO" id="GO:0022623">
    <property type="term" value="C:proteasome-activating nucleotidase complex"/>
    <property type="evidence" value="ECO:0007669"/>
    <property type="project" value="UniProtKB-UniRule"/>
</dbReference>
<dbReference type="GO" id="GO:0005524">
    <property type="term" value="F:ATP binding"/>
    <property type="evidence" value="ECO:0007669"/>
    <property type="project" value="UniProtKB-UniRule"/>
</dbReference>
<dbReference type="GO" id="GO:0016887">
    <property type="term" value="F:ATP hydrolysis activity"/>
    <property type="evidence" value="ECO:0007669"/>
    <property type="project" value="UniProtKB-UniRule"/>
</dbReference>
<dbReference type="GO" id="GO:0010498">
    <property type="term" value="P:proteasomal protein catabolic process"/>
    <property type="evidence" value="ECO:0007669"/>
    <property type="project" value="UniProtKB-UniRule"/>
</dbReference>
<dbReference type="GO" id="GO:0043335">
    <property type="term" value="P:protein unfolding"/>
    <property type="evidence" value="ECO:0007669"/>
    <property type="project" value="UniProtKB-UniRule"/>
</dbReference>
<dbReference type="CDD" id="cd19502">
    <property type="entry name" value="RecA-like_PAN_like"/>
    <property type="match status" value="1"/>
</dbReference>
<dbReference type="FunFam" id="3.40.50.300:FF:000033">
    <property type="entry name" value="26S protease regulatory subunit 6B"/>
    <property type="match status" value="1"/>
</dbReference>
<dbReference type="FunFam" id="1.10.8.60:FF:000006">
    <property type="entry name" value="26S protease regulatory subunit 8"/>
    <property type="match status" value="1"/>
</dbReference>
<dbReference type="Gene3D" id="1.10.8.60">
    <property type="match status" value="1"/>
</dbReference>
<dbReference type="Gene3D" id="2.40.50.140">
    <property type="entry name" value="Nucleic acid-binding proteins"/>
    <property type="match status" value="1"/>
</dbReference>
<dbReference type="Gene3D" id="3.40.50.300">
    <property type="entry name" value="P-loop containing nucleotide triphosphate hydrolases"/>
    <property type="match status" value="1"/>
</dbReference>
<dbReference type="HAMAP" id="MF_00553">
    <property type="entry name" value="PAN"/>
    <property type="match status" value="1"/>
</dbReference>
<dbReference type="InterPro" id="IPR050221">
    <property type="entry name" value="26S_Proteasome_ATPase"/>
</dbReference>
<dbReference type="InterPro" id="IPR003593">
    <property type="entry name" value="AAA+_ATPase"/>
</dbReference>
<dbReference type="InterPro" id="IPR041569">
    <property type="entry name" value="AAA_lid_3"/>
</dbReference>
<dbReference type="InterPro" id="IPR003959">
    <property type="entry name" value="ATPase_AAA_core"/>
</dbReference>
<dbReference type="InterPro" id="IPR003960">
    <property type="entry name" value="ATPase_AAA_CS"/>
</dbReference>
<dbReference type="InterPro" id="IPR012340">
    <property type="entry name" value="NA-bd_OB-fold"/>
</dbReference>
<dbReference type="InterPro" id="IPR023501">
    <property type="entry name" value="Nucleotidase_PAN"/>
</dbReference>
<dbReference type="InterPro" id="IPR027417">
    <property type="entry name" value="P-loop_NTPase"/>
</dbReference>
<dbReference type="InterPro" id="IPR032501">
    <property type="entry name" value="Prot_ATP_ID_OB_2nd"/>
</dbReference>
<dbReference type="NCBIfam" id="NF003069">
    <property type="entry name" value="PRK03992.1"/>
    <property type="match status" value="1"/>
</dbReference>
<dbReference type="NCBIfam" id="TIGR01242">
    <property type="entry name" value="proteasome-activating nucleotidase"/>
    <property type="match status" value="1"/>
</dbReference>
<dbReference type="PANTHER" id="PTHR23073">
    <property type="entry name" value="26S PROTEASOME REGULATORY SUBUNIT"/>
    <property type="match status" value="1"/>
</dbReference>
<dbReference type="Pfam" id="PF00004">
    <property type="entry name" value="AAA"/>
    <property type="match status" value="1"/>
</dbReference>
<dbReference type="Pfam" id="PF17862">
    <property type="entry name" value="AAA_lid_3"/>
    <property type="match status" value="1"/>
</dbReference>
<dbReference type="Pfam" id="PF16450">
    <property type="entry name" value="Prot_ATP_ID_OB_C"/>
    <property type="match status" value="1"/>
</dbReference>
<dbReference type="SMART" id="SM00382">
    <property type="entry name" value="AAA"/>
    <property type="match status" value="1"/>
</dbReference>
<dbReference type="SUPFAM" id="SSF52540">
    <property type="entry name" value="P-loop containing nucleoside triphosphate hydrolases"/>
    <property type="match status" value="1"/>
</dbReference>
<dbReference type="PROSITE" id="PS00674">
    <property type="entry name" value="AAA"/>
    <property type="match status" value="1"/>
</dbReference>
<accession>B6YXR2</accession>
<reference key="1">
    <citation type="journal article" date="2008" name="J. Bacteriol.">
        <title>The complete genome sequence of Thermococcus onnurineus NA1 reveals a mixed heterotrophic and carboxydotrophic metabolism.</title>
        <authorList>
            <person name="Lee H.S."/>
            <person name="Kang S.G."/>
            <person name="Bae S.S."/>
            <person name="Lim J.K."/>
            <person name="Cho Y."/>
            <person name="Kim Y.J."/>
            <person name="Jeon J.H."/>
            <person name="Cha S.-S."/>
            <person name="Kwon K.K."/>
            <person name="Kim H.-T."/>
            <person name="Park C.-J."/>
            <person name="Lee H.-W."/>
            <person name="Kim S.I."/>
            <person name="Chun J."/>
            <person name="Colwell R.R."/>
            <person name="Kim S.-J."/>
            <person name="Lee J.-H."/>
        </authorList>
    </citation>
    <scope>NUCLEOTIDE SEQUENCE [LARGE SCALE GENOMIC DNA]</scope>
    <source>
        <strain>NA1</strain>
    </source>
</reference>
<name>PAN_THEON</name>
<gene>
    <name evidence="1" type="primary">pan</name>
    <name type="ordered locus">TON_1385</name>
</gene>
<feature type="chain" id="PRO_1000129101" description="Proteasome-activating nucleotidase">
    <location>
        <begin position="1"/>
        <end position="398"/>
    </location>
</feature>
<feature type="region of interest" description="Docks into pockets in the proteasome alpha-ring to cause gate opening" evidence="1">
    <location>
        <begin position="396"/>
        <end position="398"/>
    </location>
</feature>
<feature type="coiled-coil region" evidence="1">
    <location>
        <begin position="18"/>
        <end position="59"/>
    </location>
</feature>
<feature type="binding site" evidence="1">
    <location>
        <begin position="183"/>
        <end position="188"/>
    </location>
    <ligand>
        <name>ATP</name>
        <dbReference type="ChEBI" id="CHEBI:30616"/>
    </ligand>
</feature>
<feature type="binding site" evidence="1">
    <location>
        <position position="322"/>
    </location>
    <ligand>
        <name>ATP</name>
        <dbReference type="ChEBI" id="CHEBI:30616"/>
    </ligand>
</feature>